<gene>
    <name type="primary">Med23</name>
    <name type="synonym">Crsp3</name>
    <name type="synonym">Kiaa1216</name>
    <name type="synonym">Sur2</name>
</gene>
<evidence type="ECO:0000250" key="1"/>
<evidence type="ECO:0000250" key="2">
    <source>
        <dbReference type="UniProtKB" id="Q9ULK4"/>
    </source>
</evidence>
<evidence type="ECO:0000256" key="3">
    <source>
        <dbReference type="SAM" id="MobiDB-lite"/>
    </source>
</evidence>
<evidence type="ECO:0000269" key="4">
    <source>
    </source>
</evidence>
<evidence type="ECO:0000269" key="5">
    <source>
    </source>
</evidence>
<evidence type="ECO:0000269" key="6">
    <source>
    </source>
</evidence>
<evidence type="ECO:0000269" key="7">
    <source>
    </source>
</evidence>
<evidence type="ECO:0000269" key="8">
    <source>
    </source>
</evidence>
<evidence type="ECO:0000303" key="9">
    <source>
    </source>
</evidence>
<evidence type="ECO:0000303" key="10">
    <source>
    </source>
</evidence>
<evidence type="ECO:0000305" key="11"/>
<keyword id="KW-0002">3D-structure</keyword>
<keyword id="KW-0010">Activator</keyword>
<keyword id="KW-0025">Alternative splicing</keyword>
<keyword id="KW-0539">Nucleus</keyword>
<keyword id="KW-1185">Reference proteome</keyword>
<keyword id="KW-0804">Transcription</keyword>
<keyword id="KW-0805">Transcription regulation</keyword>
<comment type="function">
    <text evidence="1 4 5 6 7">Component of the Mediator complex, a coactivator involved in the regulated transcription of nearly all RNA polymerase II-dependent genes. Mediator functions as a bridge to convey information from gene-specific regulatory proteins to the basal RNA polymerase II transcription machinery. Mediator is recruited to promoters by direct interactions with regulatory proteins and serves as a scaffold for the assembly of a functional pre-initiation complex with RNA polymerase II and the general transcription factors (By similarity). Also required for transcriptional activation subsequent to the assembly of the pre-initiation complex. Required for transcriptional activation by adenovirus E1A protein. Required for ELK1-dependent transcriptional activation in response to activated Ras signaling.</text>
</comment>
<comment type="subunit">
    <text evidence="2 4 6 8">Component of the Mediator complex, which is composed of MED1, MED4, MED6, MED7, MED8, MED9, MED10, MED11, MED12, MED13, MED13L, MED14, MED15, MED16, MED17, MED18, MED19, MED20, MED21, MED22, MED23, MED24, MED25, MED26, MED27, MED29, MED30, MED31, CCNC, CDK8 and CDC2L6/CDK11. The MED12, MED13, CCNC and CDK8 subunits form a distinct module termed the CDK8 module. Mediator containing the CDK8 module is less active than Mediator lacking this module in supporting transcriptional activation. Individual preparations of the Mediator complex lacking one or more distinct subunits have been variously termed ARC, CRSP, DRIP, PC2, SMCC and TRAP. Interacts with CEBPB (when not methylated), CTNNB1, and GLI3. Interacts with CDK8 and ELK1.</text>
</comment>
<comment type="subcellular location">
    <subcellularLocation>
        <location evidence="11">Nucleus</location>
    </subcellularLocation>
</comment>
<comment type="alternative products">
    <event type="alternative splicing"/>
    <isoform>
        <id>Q80YQ2-1</id>
        <name>1</name>
        <sequence type="displayed"/>
    </isoform>
    <isoform>
        <id>Q80YQ2-2</id>
        <name>2</name>
        <sequence type="described" ref="VSP_028382"/>
    </isoform>
    <isoform>
        <id>Q80YQ2-3</id>
        <name>3</name>
        <sequence type="described" ref="VSP_041583 VSP_041584"/>
    </isoform>
</comment>
<comment type="miscellaneous">
    <molecule>Isoform 3</molecule>
    <text evidence="11">May be produced at very low levels due to a premature stop codon in the mRNA, leading to nonsense-mediated mRNA decay.</text>
</comment>
<comment type="similarity">
    <text evidence="11">Belongs to the Mediator complex subunit 23 family.</text>
</comment>
<comment type="sequence caution" evidence="11">
    <conflict type="erroneous initiation">
        <sequence resource="EMBL-CDS" id="AAM28897"/>
    </conflict>
    <text>Extended N-terminus.</text>
</comment>
<comment type="sequence caution" evidence="11">
    <conflict type="erroneous initiation">
        <sequence resource="EMBL-CDS" id="BAB29019"/>
    </conflict>
    <text>Truncated N-terminus.</text>
</comment>
<comment type="sequence caution" evidence="11">
    <conflict type="erroneous translation">
        <sequence resource="EMBL-CDS" id="BAC26001"/>
    </conflict>
    <text>Wrong choice of CDS.</text>
</comment>
<comment type="sequence caution" evidence="11">
    <conflict type="erroneous initiation">
        <sequence resource="EMBL-CDS" id="BAC98122"/>
    </conflict>
    <text>Extended N-terminus.</text>
</comment>
<reference key="1">
    <citation type="journal article" date="2002" name="Science">
        <title>Transcription control by E1A and MAP kinase pathway via Sur2 mediator subunit.</title>
        <authorList>
            <person name="Stevens J.L."/>
            <person name="Cantin G.T."/>
            <person name="Wang G."/>
            <person name="Shevchenko A."/>
            <person name="Shevchenko A."/>
            <person name="Berk A.J."/>
        </authorList>
    </citation>
    <scope>NUCLEOTIDE SEQUENCE [MRNA] (ISOFORM 2)</scope>
    <scope>IDENTIFICATION BY MASS SPECTROMETRY</scope>
    <scope>FUNCTION</scope>
    <scope>INTERACTION WITH CDK8; E1A AND ELK1</scope>
    <source>
        <strain>C3H/HeJ</strain>
    </source>
</reference>
<reference key="2">
    <citation type="journal article" date="2003" name="DNA Res.">
        <title>Prediction of the coding sequences of mouse homologues of KIAA gene: III. The complete nucleotide sequences of 500 mouse KIAA-homologous cDNAs identified by screening of terminal sequences of cDNA clones randomly sampled from size-fractionated libraries.</title>
        <authorList>
            <person name="Okazaki N."/>
            <person name="Kikuno R."/>
            <person name="Ohara R."/>
            <person name="Inamoto S."/>
            <person name="Koseki H."/>
            <person name="Hiraoka S."/>
            <person name="Saga Y."/>
            <person name="Nagase T."/>
            <person name="Ohara O."/>
            <person name="Koga H."/>
        </authorList>
    </citation>
    <scope>NUCLEOTIDE SEQUENCE [LARGE SCALE MRNA] (ISOFORM 1)</scope>
    <source>
        <tissue>Embryonic tail</tissue>
    </source>
</reference>
<reference key="3">
    <citation type="journal article" date="2005" name="Science">
        <title>The transcriptional landscape of the mammalian genome.</title>
        <authorList>
            <person name="Carninci P."/>
            <person name="Kasukawa T."/>
            <person name="Katayama S."/>
            <person name="Gough J."/>
            <person name="Frith M.C."/>
            <person name="Maeda N."/>
            <person name="Oyama R."/>
            <person name="Ravasi T."/>
            <person name="Lenhard B."/>
            <person name="Wells C."/>
            <person name="Kodzius R."/>
            <person name="Shimokawa K."/>
            <person name="Bajic V.B."/>
            <person name="Brenner S.E."/>
            <person name="Batalov S."/>
            <person name="Forrest A.R."/>
            <person name="Zavolan M."/>
            <person name="Davis M.J."/>
            <person name="Wilming L.G."/>
            <person name="Aidinis V."/>
            <person name="Allen J.E."/>
            <person name="Ambesi-Impiombato A."/>
            <person name="Apweiler R."/>
            <person name="Aturaliya R.N."/>
            <person name="Bailey T.L."/>
            <person name="Bansal M."/>
            <person name="Baxter L."/>
            <person name="Beisel K.W."/>
            <person name="Bersano T."/>
            <person name="Bono H."/>
            <person name="Chalk A.M."/>
            <person name="Chiu K.P."/>
            <person name="Choudhary V."/>
            <person name="Christoffels A."/>
            <person name="Clutterbuck D.R."/>
            <person name="Crowe M.L."/>
            <person name="Dalla E."/>
            <person name="Dalrymple B.P."/>
            <person name="de Bono B."/>
            <person name="Della Gatta G."/>
            <person name="di Bernardo D."/>
            <person name="Down T."/>
            <person name="Engstrom P."/>
            <person name="Fagiolini M."/>
            <person name="Faulkner G."/>
            <person name="Fletcher C.F."/>
            <person name="Fukushima T."/>
            <person name="Furuno M."/>
            <person name="Futaki S."/>
            <person name="Gariboldi M."/>
            <person name="Georgii-Hemming P."/>
            <person name="Gingeras T.R."/>
            <person name="Gojobori T."/>
            <person name="Green R.E."/>
            <person name="Gustincich S."/>
            <person name="Harbers M."/>
            <person name="Hayashi Y."/>
            <person name="Hensch T.K."/>
            <person name="Hirokawa N."/>
            <person name="Hill D."/>
            <person name="Huminiecki L."/>
            <person name="Iacono M."/>
            <person name="Ikeo K."/>
            <person name="Iwama A."/>
            <person name="Ishikawa T."/>
            <person name="Jakt M."/>
            <person name="Kanapin A."/>
            <person name="Katoh M."/>
            <person name="Kawasawa Y."/>
            <person name="Kelso J."/>
            <person name="Kitamura H."/>
            <person name="Kitano H."/>
            <person name="Kollias G."/>
            <person name="Krishnan S.P."/>
            <person name="Kruger A."/>
            <person name="Kummerfeld S.K."/>
            <person name="Kurochkin I.V."/>
            <person name="Lareau L.F."/>
            <person name="Lazarevic D."/>
            <person name="Lipovich L."/>
            <person name="Liu J."/>
            <person name="Liuni S."/>
            <person name="McWilliam S."/>
            <person name="Madan Babu M."/>
            <person name="Madera M."/>
            <person name="Marchionni L."/>
            <person name="Matsuda H."/>
            <person name="Matsuzawa S."/>
            <person name="Miki H."/>
            <person name="Mignone F."/>
            <person name="Miyake S."/>
            <person name="Morris K."/>
            <person name="Mottagui-Tabar S."/>
            <person name="Mulder N."/>
            <person name="Nakano N."/>
            <person name="Nakauchi H."/>
            <person name="Ng P."/>
            <person name="Nilsson R."/>
            <person name="Nishiguchi S."/>
            <person name="Nishikawa S."/>
            <person name="Nori F."/>
            <person name="Ohara O."/>
            <person name="Okazaki Y."/>
            <person name="Orlando V."/>
            <person name="Pang K.C."/>
            <person name="Pavan W.J."/>
            <person name="Pavesi G."/>
            <person name="Pesole G."/>
            <person name="Petrovsky N."/>
            <person name="Piazza S."/>
            <person name="Reed J."/>
            <person name="Reid J.F."/>
            <person name="Ring B.Z."/>
            <person name="Ringwald M."/>
            <person name="Rost B."/>
            <person name="Ruan Y."/>
            <person name="Salzberg S.L."/>
            <person name="Sandelin A."/>
            <person name="Schneider C."/>
            <person name="Schoenbach C."/>
            <person name="Sekiguchi K."/>
            <person name="Semple C.A."/>
            <person name="Seno S."/>
            <person name="Sessa L."/>
            <person name="Sheng Y."/>
            <person name="Shibata Y."/>
            <person name="Shimada H."/>
            <person name="Shimada K."/>
            <person name="Silva D."/>
            <person name="Sinclair B."/>
            <person name="Sperling S."/>
            <person name="Stupka E."/>
            <person name="Sugiura K."/>
            <person name="Sultana R."/>
            <person name="Takenaka Y."/>
            <person name="Taki K."/>
            <person name="Tammoja K."/>
            <person name="Tan S.L."/>
            <person name="Tang S."/>
            <person name="Taylor M.S."/>
            <person name="Tegner J."/>
            <person name="Teichmann S.A."/>
            <person name="Ueda H.R."/>
            <person name="van Nimwegen E."/>
            <person name="Verardo R."/>
            <person name="Wei C.L."/>
            <person name="Yagi K."/>
            <person name="Yamanishi H."/>
            <person name="Zabarovsky E."/>
            <person name="Zhu S."/>
            <person name="Zimmer A."/>
            <person name="Hide W."/>
            <person name="Bult C."/>
            <person name="Grimmond S.M."/>
            <person name="Teasdale R.D."/>
            <person name="Liu E.T."/>
            <person name="Brusic V."/>
            <person name="Quackenbush J."/>
            <person name="Wahlestedt C."/>
            <person name="Mattick J.S."/>
            <person name="Hume D.A."/>
            <person name="Kai C."/>
            <person name="Sasaki D."/>
            <person name="Tomaru Y."/>
            <person name="Fukuda S."/>
            <person name="Kanamori-Katayama M."/>
            <person name="Suzuki M."/>
            <person name="Aoki J."/>
            <person name="Arakawa T."/>
            <person name="Iida J."/>
            <person name="Imamura K."/>
            <person name="Itoh M."/>
            <person name="Kato T."/>
            <person name="Kawaji H."/>
            <person name="Kawagashira N."/>
            <person name="Kawashima T."/>
            <person name="Kojima M."/>
            <person name="Kondo S."/>
            <person name="Konno H."/>
            <person name="Nakano K."/>
            <person name="Ninomiya N."/>
            <person name="Nishio T."/>
            <person name="Okada M."/>
            <person name="Plessy C."/>
            <person name="Shibata K."/>
            <person name="Shiraki T."/>
            <person name="Suzuki S."/>
            <person name="Tagami M."/>
            <person name="Waki K."/>
            <person name="Watahiki A."/>
            <person name="Okamura-Oho Y."/>
            <person name="Suzuki H."/>
            <person name="Kawai J."/>
            <person name="Hayashizaki Y."/>
        </authorList>
    </citation>
    <scope>NUCLEOTIDE SEQUENCE [LARGE SCALE MRNA] (ISOFORM 3)</scope>
    <scope>NUCLEOTIDE SEQUENCE [LARGE SCALE MRNA] OF 1114-1367 (ISOFORMS 1/2)</scope>
    <source>
        <strain>C57BL/6J</strain>
        <tissue>Embryonic head</tissue>
        <tissue>Skin</tissue>
    </source>
</reference>
<reference key="4">
    <citation type="journal article" date="2004" name="Genome Res.">
        <title>The status, quality, and expansion of the NIH full-length cDNA project: the Mammalian Gene Collection (MGC).</title>
        <authorList>
            <consortium name="The MGC Project Team"/>
        </authorList>
    </citation>
    <scope>NUCLEOTIDE SEQUENCE [LARGE SCALE MRNA] (ISOFORM 1)</scope>
    <scope>NUCLEOTIDE SEQUENCE [LARGE SCALE MRNA] OF 673-1367 (ISOFORMS 1/2)</scope>
    <source>
        <strain>C57BL/6J</strain>
        <tissue>Brain</tissue>
        <tissue>Mammary tumor</tissue>
    </source>
</reference>
<reference key="5">
    <citation type="journal article" date="2004" name="J. Virol.">
        <title>Requirement of Sur2 for efficient replication of mouse adenovirus type 1.</title>
        <authorList>
            <person name="Fang L."/>
            <person name="Stevens J.L."/>
            <person name="Berk A.J."/>
            <person name="Spindler K.R."/>
        </authorList>
    </citation>
    <scope>IDENTIFICATION BY MASS SPECTROMETRY</scope>
    <scope>FUNCTION</scope>
    <scope>INTERACTION WITH E1A</scope>
</reference>
<reference key="6">
    <citation type="journal article" date="2004" name="Mol. Cell">
        <title>Ras induces mediator complex exchange on C/EBP beta.</title>
        <authorList>
            <person name="Mo X."/>
            <person name="Kowenz-Leutz E."/>
            <person name="Xu H."/>
            <person name="Leutz A."/>
        </authorList>
    </citation>
    <scope>FUNCTION</scope>
</reference>
<reference key="7">
    <citation type="journal article" date="2005" name="Mol. Cell">
        <title>Thyroid hormone-induced juxtaposition of regulatory elements/factors and chromatin remodeling of Crabp1 dependent on MED1/TRAP220.</title>
        <authorList>
            <person name="Park S.W."/>
            <person name="Li G."/>
            <person name="Lin Y.-P."/>
            <person name="Barrero M.J."/>
            <person name="Ge K."/>
            <person name="Roeder R.G."/>
            <person name="Wei L.-N."/>
        </authorList>
    </citation>
    <scope>ASSOCIATION WITH PROMOTER REGIONS</scope>
</reference>
<reference key="8">
    <citation type="journal article" date="2005" name="Mol. Cell">
        <title>Mediator requirement for both recruitment and postrecruitment steps in transcription initiation.</title>
        <authorList>
            <person name="Wang G."/>
            <person name="Balamotis M.A."/>
            <person name="Stevens J.L."/>
            <person name="Yamaguchi Y."/>
            <person name="Handa H."/>
            <person name="Berk A.J."/>
        </authorList>
    </citation>
    <scope>FUNCTION</scope>
</reference>
<reference key="9">
    <citation type="journal article" date="2010" name="Cell">
        <title>A tissue-specific atlas of mouse protein phosphorylation and expression.</title>
        <authorList>
            <person name="Huttlin E.L."/>
            <person name="Jedrychowski M.P."/>
            <person name="Elias J.E."/>
            <person name="Goswami T."/>
            <person name="Rad R."/>
            <person name="Beausoleil S.A."/>
            <person name="Villen J."/>
            <person name="Haas W."/>
            <person name="Sowa M.E."/>
            <person name="Gygi S.P."/>
        </authorList>
    </citation>
    <scope>IDENTIFICATION BY MASS SPECTROMETRY [LARGE SCALE ANALYSIS]</scope>
    <source>
        <tissue>Kidney</tissue>
        <tissue>Lung</tissue>
        <tissue>Pancreas</tissue>
        <tissue>Spleen</tissue>
        <tissue>Testis</tissue>
    </source>
</reference>
<reference key="10">
    <citation type="journal article" date="2010" name="EMBO J.">
        <title>Crosstalk between C/EBPbeta phosphorylation, arginine methylation, and SWI/SNF/Mediator implies an indexing transcription factor code.</title>
        <authorList>
            <person name="Kowenz-Leutz E."/>
            <person name="Pless O."/>
            <person name="Dittmar G."/>
            <person name="Knoblich M."/>
            <person name="Leutz A."/>
        </authorList>
    </citation>
    <scope>INTERACTION WITH CEBPB</scope>
</reference>
<dbReference type="EMBL" id="AF507918">
    <property type="protein sequence ID" value="AAM28897.1"/>
    <property type="status" value="ALT_INIT"/>
    <property type="molecule type" value="mRNA"/>
</dbReference>
<dbReference type="EMBL" id="AK129312">
    <property type="protein sequence ID" value="BAC98122.1"/>
    <property type="status" value="ALT_INIT"/>
    <property type="molecule type" value="mRNA"/>
</dbReference>
<dbReference type="EMBL" id="AK013854">
    <property type="protein sequence ID" value="BAB29019.1"/>
    <property type="status" value="ALT_INIT"/>
    <property type="molecule type" value="mRNA"/>
</dbReference>
<dbReference type="EMBL" id="AK028545">
    <property type="protein sequence ID" value="BAC26001.1"/>
    <property type="status" value="ALT_SEQ"/>
    <property type="molecule type" value="mRNA"/>
</dbReference>
<dbReference type="EMBL" id="BC005508">
    <property type="protein sequence ID" value="AAH05508.2"/>
    <property type="molecule type" value="mRNA"/>
</dbReference>
<dbReference type="EMBL" id="BC050916">
    <property type="protein sequence ID" value="AAH50916.1"/>
    <property type="molecule type" value="mRNA"/>
</dbReference>
<dbReference type="CCDS" id="CCDS35871.2">
    <molecule id="Q80YQ2-1"/>
</dbReference>
<dbReference type="CCDS" id="CCDS48522.1">
    <molecule id="Q80YQ2-2"/>
</dbReference>
<dbReference type="RefSeq" id="NP_001159888.2">
    <molecule id="Q80YQ2-2"/>
    <property type="nucleotide sequence ID" value="NM_001166416.2"/>
</dbReference>
<dbReference type="RefSeq" id="NP_081623.3">
    <molecule id="Q80YQ2-1"/>
    <property type="nucleotide sequence ID" value="NM_027347.3"/>
</dbReference>
<dbReference type="PDB" id="6W1S">
    <property type="method" value="EM"/>
    <property type="resolution" value="4.02 A"/>
    <property type="chains" value="R=1-1367"/>
</dbReference>
<dbReference type="PDB" id="8T1I">
    <property type="method" value="EM"/>
    <property type="resolution" value="4.68 A"/>
    <property type="chains" value="R=1-1367"/>
</dbReference>
<dbReference type="PDB" id="8T1L">
    <property type="method" value="EM"/>
    <property type="resolution" value="4.83 A"/>
    <property type="chains" value="R=1-1367"/>
</dbReference>
<dbReference type="PDBsum" id="6W1S"/>
<dbReference type="PDBsum" id="8T1I"/>
<dbReference type="PDBsum" id="8T1L"/>
<dbReference type="EMDB" id="EMD-21514"/>
<dbReference type="EMDB" id="EMD-40968"/>
<dbReference type="EMDB" id="EMD-40971"/>
<dbReference type="SMR" id="Q80YQ2"/>
<dbReference type="BioGRID" id="213916">
    <property type="interactions" value="12"/>
</dbReference>
<dbReference type="ComplexPortal" id="CPX-3264">
    <property type="entry name" value="Core mediator complex"/>
</dbReference>
<dbReference type="CORUM" id="Q80YQ2"/>
<dbReference type="DIP" id="DIP-59234N"/>
<dbReference type="FunCoup" id="Q80YQ2">
    <property type="interactions" value="3507"/>
</dbReference>
<dbReference type="IntAct" id="Q80YQ2">
    <property type="interactions" value="10"/>
</dbReference>
<dbReference type="MINT" id="Q80YQ2"/>
<dbReference type="STRING" id="10090.ENSMUSP00000090316"/>
<dbReference type="iPTMnet" id="Q80YQ2"/>
<dbReference type="PhosphoSitePlus" id="Q80YQ2"/>
<dbReference type="PaxDb" id="10090-ENSMUSP00000090316"/>
<dbReference type="PeptideAtlas" id="Q80YQ2"/>
<dbReference type="ProteomicsDB" id="295864">
    <molecule id="Q80YQ2-1"/>
</dbReference>
<dbReference type="ProteomicsDB" id="295865">
    <molecule id="Q80YQ2-2"/>
</dbReference>
<dbReference type="ProteomicsDB" id="295866">
    <molecule id="Q80YQ2-3"/>
</dbReference>
<dbReference type="Pumba" id="Q80YQ2"/>
<dbReference type="DNASU" id="70208"/>
<dbReference type="Ensembl" id="ENSMUST00000020159.15">
    <molecule id="Q80YQ2-1"/>
    <property type="protein sequence ID" value="ENSMUSP00000020159.10"/>
    <property type="gene ID" value="ENSMUSG00000019984.17"/>
</dbReference>
<dbReference type="Ensembl" id="ENSMUST00000092646.13">
    <molecule id="Q80YQ2-2"/>
    <property type="protein sequence ID" value="ENSMUSP00000090316.8"/>
    <property type="gene ID" value="ENSMUSG00000019984.17"/>
</dbReference>
<dbReference type="Ensembl" id="ENSMUST00000177232.8">
    <molecule id="Q80YQ2-3"/>
    <property type="protein sequence ID" value="ENSMUSP00000134866.3"/>
    <property type="gene ID" value="ENSMUSG00000019984.17"/>
</dbReference>
<dbReference type="GeneID" id="70208"/>
<dbReference type="KEGG" id="mmu:70208"/>
<dbReference type="UCSC" id="uc011xbu.2">
    <molecule id="Q80YQ2-1"/>
    <property type="organism name" value="mouse"/>
</dbReference>
<dbReference type="AGR" id="MGI:1917458"/>
<dbReference type="CTD" id="9439"/>
<dbReference type="MGI" id="MGI:1917458">
    <property type="gene designation" value="Med23"/>
</dbReference>
<dbReference type="eggNOG" id="KOG1883">
    <property type="taxonomic scope" value="Eukaryota"/>
</dbReference>
<dbReference type="GeneTree" id="ENSGT00390000010380"/>
<dbReference type="InParanoid" id="Q80YQ2"/>
<dbReference type="OrthoDB" id="9982951at2759"/>
<dbReference type="PhylomeDB" id="Q80YQ2"/>
<dbReference type="BioGRID-ORCS" id="70208">
    <property type="hits" value="20 hits in 83 CRISPR screens"/>
</dbReference>
<dbReference type="ChiTaRS" id="Med23">
    <property type="organism name" value="mouse"/>
</dbReference>
<dbReference type="PRO" id="PR:Q80YQ2"/>
<dbReference type="Proteomes" id="UP000000589">
    <property type="component" value="Chromosome 10"/>
</dbReference>
<dbReference type="RNAct" id="Q80YQ2">
    <property type="molecule type" value="protein"/>
</dbReference>
<dbReference type="GO" id="GO:0070847">
    <property type="term" value="C:core mediator complex"/>
    <property type="evidence" value="ECO:0000266"/>
    <property type="project" value="ComplexPortal"/>
</dbReference>
<dbReference type="GO" id="GO:0016592">
    <property type="term" value="C:mediator complex"/>
    <property type="evidence" value="ECO:0000314"/>
    <property type="project" value="MGI"/>
</dbReference>
<dbReference type="GO" id="GO:0005654">
    <property type="term" value="C:nucleoplasm"/>
    <property type="evidence" value="ECO:0000304"/>
    <property type="project" value="Reactome"/>
</dbReference>
<dbReference type="GO" id="GO:0005634">
    <property type="term" value="C:nucleus"/>
    <property type="evidence" value="ECO:0000266"/>
    <property type="project" value="ComplexPortal"/>
</dbReference>
<dbReference type="GO" id="GO:0005667">
    <property type="term" value="C:transcription regulator complex"/>
    <property type="evidence" value="ECO:0000266"/>
    <property type="project" value="MGI"/>
</dbReference>
<dbReference type="GO" id="GO:0010628">
    <property type="term" value="P:positive regulation of gene expression"/>
    <property type="evidence" value="ECO:0000315"/>
    <property type="project" value="MGI"/>
</dbReference>
<dbReference type="GO" id="GO:2000409">
    <property type="term" value="P:positive regulation of T cell extravasation"/>
    <property type="evidence" value="ECO:0000315"/>
    <property type="project" value="MGI"/>
</dbReference>
<dbReference type="GO" id="GO:0032968">
    <property type="term" value="P:positive regulation of transcription elongation by RNA polymerase II"/>
    <property type="evidence" value="ECO:0000303"/>
    <property type="project" value="ComplexPortal"/>
</dbReference>
<dbReference type="GO" id="GO:0060261">
    <property type="term" value="P:positive regulation of transcription initiation by RNA polymerase II"/>
    <property type="evidence" value="ECO:0000303"/>
    <property type="project" value="ComplexPortal"/>
</dbReference>
<dbReference type="GO" id="GO:0006355">
    <property type="term" value="P:regulation of DNA-templated transcription"/>
    <property type="evidence" value="ECO:0000266"/>
    <property type="project" value="MGI"/>
</dbReference>
<dbReference type="GO" id="GO:0051123">
    <property type="term" value="P:RNA polymerase II preinitiation complex assembly"/>
    <property type="evidence" value="ECO:0000303"/>
    <property type="project" value="ComplexPortal"/>
</dbReference>
<dbReference type="InterPro" id="IPR021629">
    <property type="entry name" value="Mediator_Med23"/>
</dbReference>
<dbReference type="PANTHER" id="PTHR12691">
    <property type="entry name" value="MEDIATOR OF RNA POLYMERASE II TRANSCRIPTION SUBUNIT 23"/>
    <property type="match status" value="1"/>
</dbReference>
<dbReference type="PANTHER" id="PTHR12691:SF10">
    <property type="entry name" value="MEDIATOR OF RNA POLYMERASE II TRANSCRIPTION SUBUNIT 23"/>
    <property type="match status" value="1"/>
</dbReference>
<dbReference type="Pfam" id="PF11573">
    <property type="entry name" value="Med23"/>
    <property type="match status" value="1"/>
</dbReference>
<protein>
    <recommendedName>
        <fullName>Mediator of RNA polymerase II transcription subunit 23</fullName>
    </recommendedName>
    <alternativeName>
        <fullName>Cofactor required for Sp1 transcriptional activation subunit 3</fullName>
        <shortName>CRSP complex subunit 3</shortName>
    </alternativeName>
    <alternativeName>
        <fullName>Mediator complex subunit 23</fullName>
    </alternativeName>
    <alternativeName>
        <fullName>Protein sur-2 homolog</fullName>
        <shortName>mSur-2</shortName>
    </alternativeName>
</protein>
<feature type="chain" id="PRO_0000305931" description="Mediator of RNA polymerase II transcription subunit 23">
    <location>
        <begin position="1"/>
        <end position="1367"/>
    </location>
</feature>
<feature type="region of interest" description="Disordered" evidence="3">
    <location>
        <begin position="1343"/>
        <end position="1367"/>
    </location>
</feature>
<feature type="compositionally biased region" description="Polar residues" evidence="3">
    <location>
        <begin position="1346"/>
        <end position="1367"/>
    </location>
</feature>
<feature type="splice variant" id="VSP_041583" description="In isoform 3." evidence="10">
    <original>ES</original>
    <variation>IV</variation>
    <location>
        <begin position="54"/>
        <end position="55"/>
    </location>
</feature>
<feature type="splice variant" id="VSP_041584" description="In isoform 3." evidence="10">
    <location>
        <begin position="56"/>
        <end position="1367"/>
    </location>
</feature>
<feature type="splice variant" id="VSP_028382" description="In isoform 2." evidence="9">
    <original>K</original>
    <variation>KQTLNIA</variation>
    <location>
        <position position="291"/>
    </location>
</feature>
<feature type="sequence conflict" description="In Ref. 4; AAH50916." evidence="11" ref="4">
    <original>S</original>
    <variation>F</variation>
    <location>
        <position position="77"/>
    </location>
</feature>
<feature type="sequence conflict" description="In Ref. 1; AAM28897." evidence="11" ref="1">
    <original>N</original>
    <variation>Y</variation>
    <location>
        <position position="219"/>
    </location>
</feature>
<feature type="sequence conflict" description="In Ref. 1; AAM28897." evidence="11" ref="1">
    <original>Q</original>
    <variation>H</variation>
    <location>
        <position position="358"/>
    </location>
</feature>
<feature type="sequence conflict" description="In Ref. 1; AAM28897." evidence="11" ref="1">
    <original>G</original>
    <variation>R</variation>
    <location>
        <position position="364"/>
    </location>
</feature>
<feature type="sequence conflict" description="In Ref. 1; AAM28897." evidence="11" ref="1">
    <original>Q</original>
    <variation>H</variation>
    <location>
        <position position="385"/>
    </location>
</feature>
<feature type="sequence conflict" description="In Ref. 1; AAM28897." evidence="11" ref="1">
    <original>K</original>
    <variation>N</variation>
    <location>
        <position position="809"/>
    </location>
</feature>
<feature type="sequence conflict" description="In Ref. 1; AAM28897." evidence="11" ref="1">
    <original>ER</original>
    <variation>DK</variation>
    <location>
        <begin position="812"/>
        <end position="813"/>
    </location>
</feature>
<feature type="sequence conflict" description="In Ref. 1; AAM28897." evidence="11" ref="1">
    <original>G</original>
    <variation>S</variation>
    <location>
        <position position="840"/>
    </location>
</feature>
<feature type="sequence conflict" description="In Ref. 1; AAM28897." evidence="11" ref="1">
    <original>N</original>
    <variation>G</variation>
    <location>
        <position position="844"/>
    </location>
</feature>
<feature type="sequence conflict" description="In Ref. 1; AAM28897." evidence="11" ref="1">
    <original>VPED</original>
    <variation>GSRKN</variation>
    <location>
        <begin position="1062"/>
        <end position="1065"/>
    </location>
</feature>
<feature type="sequence conflict" description="In Ref. 1; AAM28897." evidence="11" ref="1">
    <original>D</original>
    <variation>E</variation>
    <location>
        <position position="1091"/>
    </location>
</feature>
<feature type="sequence conflict" description="In Ref. 1; AAM28897." evidence="11" ref="1">
    <original>D</original>
    <variation>N</variation>
    <location>
        <position position="1282"/>
    </location>
</feature>
<feature type="sequence conflict" description="In Ref. 1; AAM28897." evidence="11" ref="1">
    <original>E</original>
    <variation>K</variation>
    <location>
        <position position="1315"/>
    </location>
</feature>
<accession>Q80YQ2</accession>
<accession>Q6ZPV7</accession>
<accession>Q8CEC3</accession>
<accession>Q8K587</accession>
<accession>Q9CXY8</accession>
<proteinExistence type="evidence at protein level"/>
<name>MED23_MOUSE</name>
<sequence>METQLQSIFEEVVKTEIIEEAFPGMFMDTPEDEKTKLISCLAAFRQFWSGLSQESHEQCVQWIVKFIHGQHSPKRISFLYDCLAMAVETGLLPPRMVCESLINSDSLEWERTQLWALTFKLVRKIIGGVDYKGVRDLLKAILEKILTIPNTVSSAVVQQLLAAREVIAYILERNACLLPAYFAVTEIRKLYPEGKLPHWLLGNLVSDFVDTFRPTARINSICGRCSLLPVVNNSGAICNSWKLDPATLRFPLKGLLPYDKDLFEPQTALLRYVLEQPYSRDMVCNMLGLNKQHKQRCPVLEDQLVDLVVYAMERSETEEKFDDGGTSQLLWQHLSSQLIFFVLFQFASFPHMVLSLHQKLAGRGLIKGRDHLMWVLLQFISGSIQKNALADFLPVMKLFDLLYPEKECIPVPDINKPQSTHAFAMTCIWIHLNRKAQNGDSTLQIPIPHSLKLHHEFLQQSLRNKSLQMNDYKIALLCNAYSTNSECFTLPMGALVETIYGNGIMRVPLPGTSCLASASVTPLPMNLLDSLTVHAKMSLIHSIATRVIKLAHTKSSVALAPALVETYSRLLVYMEIESLGIKGFISQLLPTVFKSHAWGILHTLLEMFSHRMHHIQPHYRVQLLSHLHTLAAVAQTNQNQLHLCVESTALRLITALGSSEVQPQFTRFLNDPKTVLSAESEELNRALILTLARATHVTDFFTGSDSIQGTWCKDILQTIMNFTPHNWASHTLSCFPAPLQAFFKQNNVPQESRFNLKKNVEEEYRKWKSMTDENEIITQFSVQGFPPLFLCLLWKMLLETDHISQIGYKVLERIGARALVAHVRTFADFLVYEFSTSAGGQQLNKCIEILNDMVWKYNIVTLDRLILCLAMRSHEGNEAQVCYFIIQLLLLKPNDFRNRVSDFVKENSPEHWLQSDWHTKHMSYHKKYPEKLYFEGLAEQVDPPVPIQSPYLPIYFGNVCLRFLPVFDIVIHRFLELLPVSKSLETLLDHLGGLYKFHDRPVTYLYNTLHYYEMCLRNRDHLKRKLVHAIIGSLKDNRPQGWCLSDTYLKHAMNAREDNPWVPEDSYYCKLIGRLVDTMAGKSPGPFPNCDWRFNEFPNPAAHALHVTCVELMALAVPGKDVGNALLNVVLKSQPLVPRENITAWMNAIGLIITALPEPYWIVLHDRIVNVISSSSLTSETEWVGYPFRLFDFTACHQSYSEMSCSYTLALAHAVWHHSSIGQLSLIPKFLTEALLPVVKTEFQLLYVYHLVGPFLQRFQQERTRCMIEIGVAFYDMLLNVDQCSTHLNYMDPICDFLYHMKYMFTGDSVKEQVEKIICNLKPALKLRLRFITHISKMEPAVPPQALNSGSPAPQSNQVPASLPVTQ</sequence>
<organism>
    <name type="scientific">Mus musculus</name>
    <name type="common">Mouse</name>
    <dbReference type="NCBI Taxonomy" id="10090"/>
    <lineage>
        <taxon>Eukaryota</taxon>
        <taxon>Metazoa</taxon>
        <taxon>Chordata</taxon>
        <taxon>Craniata</taxon>
        <taxon>Vertebrata</taxon>
        <taxon>Euteleostomi</taxon>
        <taxon>Mammalia</taxon>
        <taxon>Eutheria</taxon>
        <taxon>Euarchontoglires</taxon>
        <taxon>Glires</taxon>
        <taxon>Rodentia</taxon>
        <taxon>Myomorpha</taxon>
        <taxon>Muroidea</taxon>
        <taxon>Muridae</taxon>
        <taxon>Murinae</taxon>
        <taxon>Mus</taxon>
        <taxon>Mus</taxon>
    </lineage>
</organism>